<name>PTR9_CAEEL</name>
<organism>
    <name type="scientific">Caenorhabditis elegans</name>
    <dbReference type="NCBI Taxonomy" id="6239"/>
    <lineage>
        <taxon>Eukaryota</taxon>
        <taxon>Metazoa</taxon>
        <taxon>Ecdysozoa</taxon>
        <taxon>Nematoda</taxon>
        <taxon>Chromadorea</taxon>
        <taxon>Rhabditida</taxon>
        <taxon>Rhabditina</taxon>
        <taxon>Rhabditomorpha</taxon>
        <taxon>Rhabditoidea</taxon>
        <taxon>Rhabditidae</taxon>
        <taxon>Peloderinae</taxon>
        <taxon>Caenorhabditis</taxon>
    </lineage>
</organism>
<sequence length="844" mass="96013">MKSLNFQSVVSQFFEYESTVVVRWPLPFIIIPPLLTFSIVTLTVTNFHLNVTNDTLQVFLPDDMRSLRDLKELLRLFPPRDAQRDTYSIFGSKFVYTVIEDDSSDGNILSSSGIQRMSKLHKFVMGLETSLGDNVASNCLRNKDDEACTMHPIAFALEDTTPEFAIQFLLRYPNLKFGDFVIDNAMVFGDVRIEPKSQDRDGNSPIRSSKAVRMTYILESSESTERWIDLFLSAIPRYKETNSTIFWSSSKSLAKEMERNGELLIPWMPWTSLVLVVFCMFACSSLNIVKSQPFIGFFAMFNATMATIASTSLLLYLQYPFLPLVFIMPFLVVSIGTDNMFLMLKSWRMTKKSSNEEQRYIHALTESAASLFLTSLTDGLSFAIGSISDFHAVRVFCTYCAMAILFMFLFQVTFFNAVMSLCCRREVSGKHPVFCCYEITPPEETQVLEKQSNFDFSSIVAKHLFKILNPLPSRIGVFFIFLAYLFISIHFAIGLPLGLDLKLLAPDDSYVSKELEAQERLFADYGGFCFALVRAENISLKDPMVRRNLIGLYRDLGGSEYSSPSEFWLDPFEKKNRGKKYSESDFSDELHTFLAKEPHLKFRNDIRFTMMGKIEAMKMMFRVRKLGKDNDAPRAEYMRKVMENSQFNGFVYDTSFLLVDQQMTTVYNVIVDVVSAILTMLSICVLMVPRPVSAMCIAFAILSVNIGVIGALAATNTRLDIISMITIVMSVGFSVDYVTHTTFHFVIQRDNRLEKCLLVMTEPILQSALSTAIGVSLLSFVHSYIVRTFVNTVFFVVGLGILHGLIFLPVLLDTIVPDSEYMVPYEPQHEDEENPNHYEDLYGL</sequence>
<comment type="similarity">
    <text evidence="2">Belongs to the patched family.</text>
</comment>
<keyword id="KW-1185">Reference proteome</keyword>
<feature type="chain" id="PRO_0000205974" description="Patched-related protein 9">
    <location>
        <begin position="1"/>
        <end position="844"/>
    </location>
</feature>
<feature type="domain" description="SSD" evidence="1">
    <location>
        <begin position="264"/>
        <end position="421"/>
    </location>
</feature>
<accession>Q03602</accession>
<dbReference type="EMBL" id="Z19155">
    <property type="protein sequence ID" value="CAA79560.3"/>
    <property type="molecule type" value="Genomic_DNA"/>
</dbReference>
<dbReference type="PIR" id="S28276">
    <property type="entry name" value="S28276"/>
</dbReference>
<dbReference type="RefSeq" id="NP_499030.2">
    <property type="nucleotide sequence ID" value="NM_066629.6"/>
</dbReference>
<dbReference type="SMR" id="Q03602"/>
<dbReference type="FunCoup" id="Q03602">
    <property type="interactions" value="23"/>
</dbReference>
<dbReference type="PaxDb" id="6239-F54G8.5"/>
<dbReference type="EnsemblMetazoa" id="F54G8.5.1">
    <property type="protein sequence ID" value="F54G8.5.1"/>
    <property type="gene ID" value="WBGene00004223"/>
</dbReference>
<dbReference type="GeneID" id="191747"/>
<dbReference type="KEGG" id="cel:CELE_F54G8.5"/>
<dbReference type="UCSC" id="F54G8.5">
    <property type="organism name" value="c. elegans"/>
</dbReference>
<dbReference type="AGR" id="WB:WBGene00004223"/>
<dbReference type="CTD" id="191747"/>
<dbReference type="WormBase" id="F54G8.5">
    <property type="protein sequence ID" value="CE37974"/>
    <property type="gene ID" value="WBGene00004223"/>
    <property type="gene designation" value="ptr-9"/>
</dbReference>
<dbReference type="eggNOG" id="KOG1934">
    <property type="taxonomic scope" value="Eukaryota"/>
</dbReference>
<dbReference type="HOGENOM" id="CLU_002359_2_1_1"/>
<dbReference type="InParanoid" id="Q03602"/>
<dbReference type="OMA" id="LCCRREV"/>
<dbReference type="OrthoDB" id="6510177at2759"/>
<dbReference type="PhylomeDB" id="Q03602"/>
<dbReference type="PRO" id="PR:Q03602"/>
<dbReference type="Proteomes" id="UP000001940">
    <property type="component" value="Chromosome III"/>
</dbReference>
<dbReference type="Bgee" id="WBGene00004223">
    <property type="expression patterns" value="Expressed in embryo and 1 other cell type or tissue"/>
</dbReference>
<dbReference type="GO" id="GO:0030659">
    <property type="term" value="C:cytoplasmic vesicle membrane"/>
    <property type="evidence" value="ECO:0000318"/>
    <property type="project" value="GO_Central"/>
</dbReference>
<dbReference type="GO" id="GO:0005886">
    <property type="term" value="C:plasma membrane"/>
    <property type="evidence" value="ECO:0000318"/>
    <property type="project" value="GO_Central"/>
</dbReference>
<dbReference type="GO" id="GO:0006897">
    <property type="term" value="P:endocytosis"/>
    <property type="evidence" value="ECO:0000318"/>
    <property type="project" value="GO_Central"/>
</dbReference>
<dbReference type="GO" id="GO:0018996">
    <property type="term" value="P:molting cycle, collagen and cuticulin-based cuticle"/>
    <property type="evidence" value="ECO:0000315"/>
    <property type="project" value="WormBase"/>
</dbReference>
<dbReference type="FunFam" id="1.20.1640.10:FF:000071">
    <property type="entry name" value="Patched-related protein 9"/>
    <property type="match status" value="1"/>
</dbReference>
<dbReference type="Gene3D" id="1.20.1640.10">
    <property type="entry name" value="Multidrug efflux transporter AcrB transmembrane domain"/>
    <property type="match status" value="2"/>
</dbReference>
<dbReference type="InterPro" id="IPR053958">
    <property type="entry name" value="HMGCR/SNAP/NPC1-like_SSD"/>
</dbReference>
<dbReference type="InterPro" id="IPR051697">
    <property type="entry name" value="Patched_domain-protein"/>
</dbReference>
<dbReference type="InterPro" id="IPR000731">
    <property type="entry name" value="SSD"/>
</dbReference>
<dbReference type="PANTHER" id="PTHR10796">
    <property type="entry name" value="PATCHED-RELATED"/>
    <property type="match status" value="1"/>
</dbReference>
<dbReference type="PANTHER" id="PTHR10796:SF96">
    <property type="entry name" value="PATCHED-RELATED PROTEIN 9"/>
    <property type="match status" value="1"/>
</dbReference>
<dbReference type="Pfam" id="PF12349">
    <property type="entry name" value="Sterol-sensing"/>
    <property type="match status" value="1"/>
</dbReference>
<dbReference type="SUPFAM" id="SSF82866">
    <property type="entry name" value="Multidrug efflux transporter AcrB transmembrane domain"/>
    <property type="match status" value="2"/>
</dbReference>
<dbReference type="PROSITE" id="PS50156">
    <property type="entry name" value="SSD"/>
    <property type="match status" value="1"/>
</dbReference>
<proteinExistence type="inferred from homology"/>
<protein>
    <recommendedName>
        <fullName>Patched-related protein 9</fullName>
    </recommendedName>
</protein>
<evidence type="ECO:0000255" key="1">
    <source>
        <dbReference type="PROSITE-ProRule" id="PRU00199"/>
    </source>
</evidence>
<evidence type="ECO:0000305" key="2"/>
<gene>
    <name type="primary">ptr-9</name>
    <name type="ORF">F54G8.5</name>
</gene>
<reference key="1">
    <citation type="journal article" date="1994" name="Nature">
        <title>2.2 Mb of contiguous nucleotide sequence from chromosome III of C. elegans.</title>
        <authorList>
            <person name="Wilson R."/>
            <person name="Ainscough R."/>
            <person name="Anderson K."/>
            <person name="Baynes C."/>
            <person name="Berks M."/>
            <person name="Bonfield J."/>
            <person name="Burton J."/>
            <person name="Connell M."/>
            <person name="Copsey T."/>
            <person name="Cooper J."/>
            <person name="Coulson A."/>
            <person name="Craxton M."/>
            <person name="Dear S."/>
            <person name="Du Z."/>
            <person name="Durbin R."/>
            <person name="Favello A."/>
            <person name="Fraser A."/>
            <person name="Fulton L."/>
            <person name="Gardner A."/>
            <person name="Green P."/>
            <person name="Hawkins T."/>
            <person name="Hillier L."/>
            <person name="Jier M."/>
            <person name="Johnston L."/>
            <person name="Jones M."/>
            <person name="Kershaw J."/>
            <person name="Kirsten J."/>
            <person name="Laisster N."/>
            <person name="Latreille P."/>
            <person name="Lightning J."/>
            <person name="Lloyd C."/>
            <person name="Mortimore B."/>
            <person name="O'Callaghan M."/>
            <person name="Parsons J."/>
            <person name="Percy C."/>
            <person name="Rifken L."/>
            <person name="Roopra A."/>
            <person name="Saunders D."/>
            <person name="Shownkeen R."/>
            <person name="Sims M."/>
            <person name="Smaldon N."/>
            <person name="Smith A."/>
            <person name="Smith M."/>
            <person name="Sonnhammer E."/>
            <person name="Staden R."/>
            <person name="Sulston J."/>
            <person name="Thierry-Mieg J."/>
            <person name="Thomas K."/>
            <person name="Vaudin M."/>
            <person name="Vaughan K."/>
            <person name="Waterston R."/>
            <person name="Watson A."/>
            <person name="Weinstock L."/>
            <person name="Wilkinson-Sproat J."/>
            <person name="Wohldman P."/>
        </authorList>
    </citation>
    <scope>NUCLEOTIDE SEQUENCE [LARGE SCALE GENOMIC DNA]</scope>
    <source>
        <strain>Bristol N2</strain>
    </source>
</reference>
<reference key="2">
    <citation type="journal article" date="1998" name="Science">
        <title>Genome sequence of the nematode C. elegans: a platform for investigating biology.</title>
        <authorList>
            <consortium name="The C. elegans sequencing consortium"/>
        </authorList>
    </citation>
    <scope>NUCLEOTIDE SEQUENCE [LARGE SCALE GENOMIC DNA]</scope>
    <source>
        <strain>Bristol N2</strain>
    </source>
</reference>